<organism>
    <name type="scientific">Fusarium langsethiae</name>
    <dbReference type="NCBI Taxonomy" id="179993"/>
    <lineage>
        <taxon>Eukaryota</taxon>
        <taxon>Fungi</taxon>
        <taxon>Dikarya</taxon>
        <taxon>Ascomycota</taxon>
        <taxon>Pezizomycotina</taxon>
        <taxon>Sordariomycetes</taxon>
        <taxon>Hypocreomycetidae</taxon>
        <taxon>Hypocreales</taxon>
        <taxon>Nectriaceae</taxon>
        <taxon>Fusarium</taxon>
    </lineage>
</organism>
<reference key="1">
    <citation type="submission" date="2015-04" db="EMBL/GenBank/DDBJ databases">
        <title>The draft genome sequence of Fusarium langsethiae, a T-2/HT-2 mycotoxin producer.</title>
        <authorList>
            <person name="Lysoe E."/>
            <person name="Divon H.H."/>
            <person name="Terzi V."/>
            <person name="Orru L."/>
            <person name="Lamontanara A."/>
            <person name="Kolseth A.-K."/>
            <person name="Frandsen R.J."/>
            <person name="Nielsen K."/>
            <person name="Thrane U."/>
        </authorList>
    </citation>
    <scope>NUCLEOTIDE SEQUENCE [LARGE SCALE GENOMIC DNA]</scope>
    <source>
        <strain>Fl201059</strain>
    </source>
</reference>
<reference key="2">
    <citation type="journal article" date="2009" name="Mol. Plant Microbe Interact.">
        <title>Biosynthesis and role in virulence of the histone deacetylase inhibitor depudecin from Alternaria brassicicola.</title>
        <authorList>
            <person name="Wight W.D."/>
            <person name="Kim K.-H."/>
            <person name="Lawrence C.B."/>
            <person name="Walton J.D."/>
        </authorList>
    </citation>
    <scope>FUNCTION</scope>
</reference>
<reference key="3">
    <citation type="journal article" date="2017" name="Mol. Biol. Evol.">
        <title>Differential retention of gene functions in a secondary metabolite cluster.</title>
        <authorList>
            <person name="Reynolds H."/>
            <person name="Slot J.C."/>
            <person name="Divon H.H."/>
            <person name="Lysoee E."/>
            <person name="Proctor R.H."/>
            <person name="Brown D.W."/>
        </authorList>
    </citation>
    <scope>FUNCTION</scope>
    <scope>INDUCTION</scope>
</reference>
<evidence type="ECO:0000255" key="1"/>
<evidence type="ECO:0000255" key="2">
    <source>
        <dbReference type="PROSITE-ProRule" id="PRU00498"/>
    </source>
</evidence>
<evidence type="ECO:0000256" key="3">
    <source>
        <dbReference type="SAM" id="MobiDB-lite"/>
    </source>
</evidence>
<evidence type="ECO:0000269" key="4">
    <source>
    </source>
</evidence>
<evidence type="ECO:0000269" key="5">
    <source>
    </source>
</evidence>
<evidence type="ECO:0000303" key="6">
    <source>
    </source>
</evidence>
<evidence type="ECO:0000305" key="7"/>
<comment type="function">
    <text evidence="4 5">Efflux pump; part of the gene cluster that mediates the biosynthesis of depudecin, a highly oxidized eleven-carbon linear polyketide that acts as a histone deacetylase (HDAC) inhibitor and makes a small contribution to pathogenesis (PubMed:19737099, PubMed:28460114). Is presumed either to be responsible for exporting depudecin, to provide self-protection, or both (PubMed:19737099).</text>
</comment>
<comment type="subcellular location">
    <subcellularLocation>
        <location evidence="7">Cell membrane</location>
        <topology evidence="1">Multi-pass membrane protein</topology>
    </subcellularLocation>
</comment>
<comment type="induction">
    <text evidence="5">Expression correlates with the production of depudecin with high levels on oat grain medium, and minimal levels on oat flower medium and complete medium (PubMed:28460114).</text>
</comment>
<comment type="similarity">
    <text evidence="7">Belongs to the major facilitator superfamily. TCR/Tet family.</text>
</comment>
<protein>
    <recommendedName>
        <fullName evidence="6">Efflux pump DEP3</fullName>
    </recommendedName>
    <alternativeName>
        <fullName evidence="6">Depudecin biosynthesis cluster protein 3</fullName>
    </alternativeName>
</protein>
<dbReference type="EMBL" id="JXCE01000338">
    <property type="protein sequence ID" value="KPA37943.1"/>
    <property type="molecule type" value="Genomic_DNA"/>
</dbReference>
<dbReference type="SMR" id="A0A0M9EQT6"/>
<dbReference type="GlyCosmos" id="A0A0M9EQT6">
    <property type="glycosylation" value="1 site, No reported glycans"/>
</dbReference>
<dbReference type="OrthoDB" id="10021397at2759"/>
<dbReference type="Proteomes" id="UP000037904">
    <property type="component" value="Unassembled WGS sequence"/>
</dbReference>
<dbReference type="GO" id="GO:0005886">
    <property type="term" value="C:plasma membrane"/>
    <property type="evidence" value="ECO:0007669"/>
    <property type="project" value="UniProtKB-SubCell"/>
</dbReference>
<dbReference type="GO" id="GO:0022857">
    <property type="term" value="F:transmembrane transporter activity"/>
    <property type="evidence" value="ECO:0007669"/>
    <property type="project" value="InterPro"/>
</dbReference>
<dbReference type="FunFam" id="1.20.1250.20:FF:000429">
    <property type="entry name" value="MFS drug efflux transporter, putative"/>
    <property type="match status" value="1"/>
</dbReference>
<dbReference type="Gene3D" id="1.20.1250.20">
    <property type="entry name" value="MFS general substrate transporter like domains"/>
    <property type="match status" value="2"/>
</dbReference>
<dbReference type="InterPro" id="IPR011701">
    <property type="entry name" value="MFS"/>
</dbReference>
<dbReference type="InterPro" id="IPR020846">
    <property type="entry name" value="MFS_dom"/>
</dbReference>
<dbReference type="InterPro" id="IPR036259">
    <property type="entry name" value="MFS_trans_sf"/>
</dbReference>
<dbReference type="PANTHER" id="PTHR23501">
    <property type="entry name" value="MAJOR FACILITATOR SUPERFAMILY"/>
    <property type="match status" value="1"/>
</dbReference>
<dbReference type="PANTHER" id="PTHR23501:SF12">
    <property type="entry name" value="MAJOR FACILITATOR SUPERFAMILY (MFS) PROFILE DOMAIN-CONTAINING PROTEIN-RELATED"/>
    <property type="match status" value="1"/>
</dbReference>
<dbReference type="Pfam" id="PF07690">
    <property type="entry name" value="MFS_1"/>
    <property type="match status" value="1"/>
</dbReference>
<dbReference type="SUPFAM" id="SSF103473">
    <property type="entry name" value="MFS general substrate transporter"/>
    <property type="match status" value="2"/>
</dbReference>
<dbReference type="PROSITE" id="PS50850">
    <property type="entry name" value="MFS"/>
    <property type="match status" value="1"/>
</dbReference>
<sequence>MSEQSTLAGPYTEKPGVESQNPTGDGKASFDETSPRDIHGWRWAIAYAAMLSTTFLFALDNTIVANIQPSIINDFGHLELISWIGTGFALGTMFILLWGKIYGVFNIKWVYIFNILLFEVGSAVCGAAPNIQALIIGRVIAGIGGSGMYSGTLTYVSVLSNQKEKPAYLAGSTVVWGVGSVVGPVVGGAFAASSATWRWGFYINLPIGAVFAPAYMILFPNWDPNPTLTLAEKFRLVDWINAVIFLAGSACLTVALTFGGVVYSFNSGTIIALWTVTGVLLVAFIVLLKLHPLVSKENRLYPLHFFKQMTLINMQLQVFLASGIILAMTYYVPLYFQFIKGDGALQAGVRLLPLIMFMVAFSMVNGFLMPKYGLIPIWYIVGSALTLIGSALMYTIDENTSNGNVYGYNILVGAGAGCYIVAGFAIVQSLVPTHEIANAVGAMTISQDLGMVLFLAICGSLFHNVAVDKVGKALPSASETEIGNLIAGTSSSAFQALSEADKDLVIPEIASAMKSIWAFFMAAAALSFVCSWPLFKTKLGGKKVEASVVV</sequence>
<gene>
    <name evidence="6" type="primary">DEP3</name>
    <name type="ORF">FLAG1_09234</name>
</gene>
<accession>A0A0M9EQT6</accession>
<keyword id="KW-1003">Cell membrane</keyword>
<keyword id="KW-0325">Glycoprotein</keyword>
<keyword id="KW-0472">Membrane</keyword>
<keyword id="KW-1185">Reference proteome</keyword>
<keyword id="KW-0812">Transmembrane</keyword>
<keyword id="KW-1133">Transmembrane helix</keyword>
<keyword id="KW-0813">Transport</keyword>
<name>DEP3_FUSLA</name>
<feature type="chain" id="PRO_0000441940" description="Efflux pump DEP3">
    <location>
        <begin position="1"/>
        <end position="550"/>
    </location>
</feature>
<feature type="transmembrane region" description="Helical" evidence="1">
    <location>
        <begin position="44"/>
        <end position="64"/>
    </location>
</feature>
<feature type="transmembrane region" description="Helical" evidence="1">
    <location>
        <begin position="78"/>
        <end position="98"/>
    </location>
</feature>
<feature type="transmembrane region" description="Helical" evidence="1">
    <location>
        <begin position="109"/>
        <end position="129"/>
    </location>
</feature>
<feature type="transmembrane region" description="Helical" evidence="1">
    <location>
        <begin position="139"/>
        <end position="159"/>
    </location>
</feature>
<feature type="transmembrane region" description="Helical" evidence="1">
    <location>
        <begin position="172"/>
        <end position="192"/>
    </location>
</feature>
<feature type="transmembrane region" description="Helical" evidence="1">
    <location>
        <begin position="199"/>
        <end position="219"/>
    </location>
</feature>
<feature type="transmembrane region" description="Helical" evidence="1">
    <location>
        <begin position="242"/>
        <end position="262"/>
    </location>
</feature>
<feature type="transmembrane region" description="Helical" evidence="1">
    <location>
        <begin position="268"/>
        <end position="288"/>
    </location>
</feature>
<feature type="transmembrane region" description="Helical" evidence="1">
    <location>
        <begin position="319"/>
        <end position="339"/>
    </location>
</feature>
<feature type="transmembrane region" description="Helical" evidence="1">
    <location>
        <begin position="351"/>
        <end position="371"/>
    </location>
</feature>
<feature type="transmembrane region" description="Helical" evidence="1">
    <location>
        <begin position="373"/>
        <end position="393"/>
    </location>
</feature>
<feature type="transmembrane region" description="Helical" evidence="1">
    <location>
        <begin position="410"/>
        <end position="430"/>
    </location>
</feature>
<feature type="transmembrane region" description="Helical" evidence="1">
    <location>
        <begin position="439"/>
        <end position="459"/>
    </location>
</feature>
<feature type="transmembrane region" description="Helical" evidence="1">
    <location>
        <begin position="515"/>
        <end position="535"/>
    </location>
</feature>
<feature type="region of interest" description="Disordered" evidence="3">
    <location>
        <begin position="1"/>
        <end position="33"/>
    </location>
</feature>
<feature type="glycosylation site" description="N-linked (GlcNAc...) asparagine" evidence="2">
    <location>
        <position position="399"/>
    </location>
</feature>
<proteinExistence type="evidence at transcript level"/>